<evidence type="ECO:0000250" key="1">
    <source>
        <dbReference type="UniProtKB" id="P68871"/>
    </source>
</evidence>
<evidence type="ECO:0000255" key="2">
    <source>
        <dbReference type="PROSITE-ProRule" id="PRU00238"/>
    </source>
</evidence>
<proteinExistence type="evidence at protein level"/>
<dbReference type="PIR" id="S16110">
    <property type="entry name" value="S16110"/>
</dbReference>
<dbReference type="SMR" id="P23020"/>
<dbReference type="GO" id="GO:0072562">
    <property type="term" value="C:blood microparticle"/>
    <property type="evidence" value="ECO:0007669"/>
    <property type="project" value="TreeGrafter"/>
</dbReference>
<dbReference type="GO" id="GO:0031838">
    <property type="term" value="C:haptoglobin-hemoglobin complex"/>
    <property type="evidence" value="ECO:0007669"/>
    <property type="project" value="TreeGrafter"/>
</dbReference>
<dbReference type="GO" id="GO:0005833">
    <property type="term" value="C:hemoglobin complex"/>
    <property type="evidence" value="ECO:0007669"/>
    <property type="project" value="InterPro"/>
</dbReference>
<dbReference type="GO" id="GO:0031720">
    <property type="term" value="F:haptoglobin binding"/>
    <property type="evidence" value="ECO:0007669"/>
    <property type="project" value="TreeGrafter"/>
</dbReference>
<dbReference type="GO" id="GO:0020037">
    <property type="term" value="F:heme binding"/>
    <property type="evidence" value="ECO:0007669"/>
    <property type="project" value="InterPro"/>
</dbReference>
<dbReference type="GO" id="GO:0031721">
    <property type="term" value="F:hemoglobin alpha binding"/>
    <property type="evidence" value="ECO:0007669"/>
    <property type="project" value="TreeGrafter"/>
</dbReference>
<dbReference type="GO" id="GO:0046872">
    <property type="term" value="F:metal ion binding"/>
    <property type="evidence" value="ECO:0007669"/>
    <property type="project" value="UniProtKB-KW"/>
</dbReference>
<dbReference type="GO" id="GO:0043177">
    <property type="term" value="F:organic acid binding"/>
    <property type="evidence" value="ECO:0007669"/>
    <property type="project" value="TreeGrafter"/>
</dbReference>
<dbReference type="GO" id="GO:0019825">
    <property type="term" value="F:oxygen binding"/>
    <property type="evidence" value="ECO:0007669"/>
    <property type="project" value="InterPro"/>
</dbReference>
<dbReference type="GO" id="GO:0005344">
    <property type="term" value="F:oxygen carrier activity"/>
    <property type="evidence" value="ECO:0007669"/>
    <property type="project" value="UniProtKB-KW"/>
</dbReference>
<dbReference type="GO" id="GO:0004601">
    <property type="term" value="F:peroxidase activity"/>
    <property type="evidence" value="ECO:0007669"/>
    <property type="project" value="TreeGrafter"/>
</dbReference>
<dbReference type="GO" id="GO:0042744">
    <property type="term" value="P:hydrogen peroxide catabolic process"/>
    <property type="evidence" value="ECO:0007669"/>
    <property type="project" value="TreeGrafter"/>
</dbReference>
<dbReference type="CDD" id="cd08925">
    <property type="entry name" value="Hb-beta-like"/>
    <property type="match status" value="1"/>
</dbReference>
<dbReference type="FunFam" id="1.10.490.10:FF:000001">
    <property type="entry name" value="Hemoglobin subunit beta"/>
    <property type="match status" value="1"/>
</dbReference>
<dbReference type="Gene3D" id="1.10.490.10">
    <property type="entry name" value="Globins"/>
    <property type="match status" value="1"/>
</dbReference>
<dbReference type="InterPro" id="IPR000971">
    <property type="entry name" value="Globin"/>
</dbReference>
<dbReference type="InterPro" id="IPR009050">
    <property type="entry name" value="Globin-like_sf"/>
</dbReference>
<dbReference type="InterPro" id="IPR012292">
    <property type="entry name" value="Globin/Proto"/>
</dbReference>
<dbReference type="InterPro" id="IPR002337">
    <property type="entry name" value="Hemoglobin_b"/>
</dbReference>
<dbReference type="InterPro" id="IPR050056">
    <property type="entry name" value="Hemoglobin_oxygen_transport"/>
</dbReference>
<dbReference type="PANTHER" id="PTHR11442">
    <property type="entry name" value="HEMOGLOBIN FAMILY MEMBER"/>
    <property type="match status" value="1"/>
</dbReference>
<dbReference type="PANTHER" id="PTHR11442:SF42">
    <property type="entry name" value="HEMOGLOBIN SUBUNIT BETA"/>
    <property type="match status" value="1"/>
</dbReference>
<dbReference type="Pfam" id="PF00042">
    <property type="entry name" value="Globin"/>
    <property type="match status" value="1"/>
</dbReference>
<dbReference type="PRINTS" id="PR00814">
    <property type="entry name" value="BETAHAEM"/>
</dbReference>
<dbReference type="SUPFAM" id="SSF46458">
    <property type="entry name" value="Globin-like"/>
    <property type="match status" value="1"/>
</dbReference>
<dbReference type="PROSITE" id="PS01033">
    <property type="entry name" value="GLOBIN"/>
    <property type="match status" value="1"/>
</dbReference>
<name>HBB_PROCR</name>
<reference key="1">
    <citation type="journal article" date="1991" name="Biol. Chem. Hoppe-Seyler">
        <title>The primary structure of the hemoglobin from the aardwolf (Proteles cristatus, Hyaenidae).</title>
        <authorList>
            <person name="Stoeva S."/>
            <person name="Kleinschmidt T."/>
            <person name="Braunitzer G."/>
            <person name="Scheil H.-G."/>
        </authorList>
    </citation>
    <scope>PROTEIN SEQUENCE</scope>
</reference>
<accession>P23020</accession>
<gene>
    <name type="primary">HBB</name>
</gene>
<protein>
    <recommendedName>
        <fullName>Hemoglobin subunit beta</fullName>
    </recommendedName>
    <alternativeName>
        <fullName>Beta-globin</fullName>
    </alternativeName>
    <alternativeName>
        <fullName>Hemoglobin beta chain</fullName>
    </alternativeName>
</protein>
<organism>
    <name type="scientific">Proteles cristata</name>
    <name type="common">Aardwolf</name>
    <dbReference type="NCBI Taxonomy" id="9680"/>
    <lineage>
        <taxon>Eukaryota</taxon>
        <taxon>Metazoa</taxon>
        <taxon>Chordata</taxon>
        <taxon>Craniata</taxon>
        <taxon>Vertebrata</taxon>
        <taxon>Euteleostomi</taxon>
        <taxon>Mammalia</taxon>
        <taxon>Eutheria</taxon>
        <taxon>Laurasiatheria</taxon>
        <taxon>Carnivora</taxon>
        <taxon>Feliformia</taxon>
        <taxon>Hyaenidae</taxon>
        <taxon>Proteles</taxon>
    </lineage>
</organism>
<sequence length="146" mass="15987">GFLTAEEKSLVNDLWSKVNVDEVGGEALGRLLVVYPWTQRFFQSFGDLSSADAIMGNGKVKAHGKKVLNSFSDGLKHIDDLKGTFAKLSELHCDKLHVDPENFKLLGNVLVCVLAHHFGNEFTPPVQAAYQKVVAGVANALAHKYH</sequence>
<keyword id="KW-0007">Acetylation</keyword>
<keyword id="KW-0903">Direct protein sequencing</keyword>
<keyword id="KW-0349">Heme</keyword>
<keyword id="KW-0408">Iron</keyword>
<keyword id="KW-0479">Metal-binding</keyword>
<keyword id="KW-0561">Oxygen transport</keyword>
<keyword id="KW-0597">Phosphoprotein</keyword>
<keyword id="KW-0702">S-nitrosylation</keyword>
<keyword id="KW-0813">Transport</keyword>
<feature type="chain" id="PRO_0000053076" description="Hemoglobin subunit beta">
    <location>
        <begin position="1"/>
        <end position="146"/>
    </location>
</feature>
<feature type="domain" description="Globin" evidence="2">
    <location>
        <begin position="2"/>
        <end position="146"/>
    </location>
</feature>
<feature type="binding site" description="distal binding residue">
    <location>
        <position position="63"/>
    </location>
    <ligand>
        <name>heme b</name>
        <dbReference type="ChEBI" id="CHEBI:60344"/>
    </ligand>
    <ligandPart>
        <name>Fe</name>
        <dbReference type="ChEBI" id="CHEBI:18248"/>
    </ligandPart>
</feature>
<feature type="binding site" description="proximal binding residue">
    <location>
        <position position="92"/>
    </location>
    <ligand>
        <name>heme b</name>
        <dbReference type="ChEBI" id="CHEBI:60344"/>
    </ligand>
    <ligandPart>
        <name>Fe</name>
        <dbReference type="ChEBI" id="CHEBI:18248"/>
    </ligandPart>
</feature>
<feature type="modified residue" description="Phosphoserine" evidence="1">
    <location>
        <position position="44"/>
    </location>
</feature>
<feature type="modified residue" description="N6-acetyllysine" evidence="1">
    <location>
        <position position="59"/>
    </location>
</feature>
<feature type="modified residue" description="N6-acetyllysine" evidence="1">
    <location>
        <position position="82"/>
    </location>
</feature>
<feature type="modified residue" description="S-nitrosocysteine" evidence="1">
    <location>
        <position position="93"/>
    </location>
</feature>
<feature type="modified residue" description="N6-acetyllysine" evidence="1">
    <location>
        <position position="144"/>
    </location>
</feature>
<comment type="function">
    <text>Involved in oxygen transport from the lung to the various peripheral tissues.</text>
</comment>
<comment type="subunit">
    <text>Heterotetramer of two alpha chains and two beta chains.</text>
</comment>
<comment type="tissue specificity">
    <text>Red blood cells.</text>
</comment>
<comment type="similarity">
    <text evidence="2">Belongs to the globin family.</text>
</comment>